<sequence length="97" mass="11880">MIEEEITLKIPKSIVNQIDELIKEGYFSSRDEFVRYAVRESLTEIAISKKMSREECKKIWEEYKIRKKDIKIDEKEIEELLDEVDKEWKKWKKLKLK</sequence>
<reference key="1">
    <citation type="journal article" date="1996" name="Science">
        <title>Complete genome sequence of the methanogenic archaeon, Methanococcus jannaschii.</title>
        <authorList>
            <person name="Bult C.J."/>
            <person name="White O."/>
            <person name="Olsen G.J."/>
            <person name="Zhou L."/>
            <person name="Fleischmann R.D."/>
            <person name="Sutton G.G."/>
            <person name="Blake J.A."/>
            <person name="FitzGerald L.M."/>
            <person name="Clayton R.A."/>
            <person name="Gocayne J.D."/>
            <person name="Kerlavage A.R."/>
            <person name="Dougherty B.A."/>
            <person name="Tomb J.-F."/>
            <person name="Adams M.D."/>
            <person name="Reich C.I."/>
            <person name="Overbeek R."/>
            <person name="Kirkness E.F."/>
            <person name="Weinstock K.G."/>
            <person name="Merrick J.M."/>
            <person name="Glodek A."/>
            <person name="Scott J.L."/>
            <person name="Geoghagen N.S.M."/>
            <person name="Weidman J.F."/>
            <person name="Fuhrmann J.L."/>
            <person name="Nguyen D."/>
            <person name="Utterback T.R."/>
            <person name="Kelley J.M."/>
            <person name="Peterson J.D."/>
            <person name="Sadow P.W."/>
            <person name="Hanna M.C."/>
            <person name="Cotton M.D."/>
            <person name="Roberts K.M."/>
            <person name="Hurst M.A."/>
            <person name="Kaine B.P."/>
            <person name="Borodovsky M."/>
            <person name="Klenk H.-P."/>
            <person name="Fraser C.M."/>
            <person name="Smith H.O."/>
            <person name="Woese C.R."/>
            <person name="Venter J.C."/>
        </authorList>
    </citation>
    <scope>NUCLEOTIDE SEQUENCE [LARGE SCALE GENOMIC DNA]</scope>
    <source>
        <strain>ATCC 43067 / DSM 2661 / JAL-1 / JCM 10045 / NBRC 100440</strain>
    </source>
</reference>
<organism>
    <name type="scientific">Methanocaldococcus jannaschii (strain ATCC 43067 / DSM 2661 / JAL-1 / JCM 10045 / NBRC 100440)</name>
    <name type="common">Methanococcus jannaschii</name>
    <dbReference type="NCBI Taxonomy" id="243232"/>
    <lineage>
        <taxon>Archaea</taxon>
        <taxon>Methanobacteriati</taxon>
        <taxon>Methanobacteriota</taxon>
        <taxon>Methanomada group</taxon>
        <taxon>Methanococci</taxon>
        <taxon>Methanococcales</taxon>
        <taxon>Methanocaldococcaceae</taxon>
        <taxon>Methanocaldococcus</taxon>
    </lineage>
</organism>
<keyword id="KW-1185">Reference proteome</keyword>
<name>Y1679_METJA</name>
<proteinExistence type="predicted"/>
<dbReference type="EMBL" id="L77117">
    <property type="protein sequence ID" value="AAB99704.1"/>
    <property type="molecule type" value="Genomic_DNA"/>
</dbReference>
<dbReference type="PIR" id="E64509">
    <property type="entry name" value="E64509"/>
</dbReference>
<dbReference type="RefSeq" id="WP_010871203.1">
    <property type="nucleotide sequence ID" value="NC_000909.1"/>
</dbReference>
<dbReference type="SMR" id="Q59073"/>
<dbReference type="STRING" id="243232.MJ_1679"/>
<dbReference type="PaxDb" id="243232-MJ_1679"/>
<dbReference type="EnsemblBacteria" id="AAB99704">
    <property type="protein sequence ID" value="AAB99704"/>
    <property type="gene ID" value="MJ_1679"/>
</dbReference>
<dbReference type="GeneID" id="1452588"/>
<dbReference type="KEGG" id="mja:MJ_1679"/>
<dbReference type="eggNOG" id="arCOG01011">
    <property type="taxonomic scope" value="Archaea"/>
</dbReference>
<dbReference type="HOGENOM" id="CLU_2461944_0_0_2"/>
<dbReference type="InParanoid" id="Q59073"/>
<dbReference type="OrthoDB" id="25654at2157"/>
<dbReference type="PhylomeDB" id="Q59073"/>
<dbReference type="Proteomes" id="UP000000805">
    <property type="component" value="Chromosome"/>
</dbReference>
<dbReference type="GO" id="GO:0006355">
    <property type="term" value="P:regulation of DNA-templated transcription"/>
    <property type="evidence" value="ECO:0007669"/>
    <property type="project" value="InterPro"/>
</dbReference>
<dbReference type="CDD" id="cd22231">
    <property type="entry name" value="RHH_NikR_HicB-like"/>
    <property type="match status" value="1"/>
</dbReference>
<dbReference type="Gene3D" id="1.10.1220.10">
    <property type="entry name" value="Met repressor-like"/>
    <property type="match status" value="1"/>
</dbReference>
<dbReference type="InterPro" id="IPR013321">
    <property type="entry name" value="Arc_rbn_hlx_hlx"/>
</dbReference>
<dbReference type="InterPro" id="IPR041088">
    <property type="entry name" value="RHH_8"/>
</dbReference>
<dbReference type="InterPro" id="IPR010985">
    <property type="entry name" value="Ribbon_hlx_hlx"/>
</dbReference>
<dbReference type="InterPro" id="IPR016748">
    <property type="entry name" value="Tscrpt_reg_CopG_prd"/>
</dbReference>
<dbReference type="PANTHER" id="PTHR36215">
    <property type="entry name" value="BLL4998 PROTEIN"/>
    <property type="match status" value="1"/>
</dbReference>
<dbReference type="PANTHER" id="PTHR36215:SF1">
    <property type="entry name" value="BLL4998 PROTEIN"/>
    <property type="match status" value="1"/>
</dbReference>
<dbReference type="Pfam" id="PF17723">
    <property type="entry name" value="RHH_8"/>
    <property type="match status" value="1"/>
</dbReference>
<dbReference type="PIRSF" id="PIRSF019108">
    <property type="entry name" value="Txn_reg_CopG_prd"/>
    <property type="match status" value="1"/>
</dbReference>
<dbReference type="SUPFAM" id="SSF47598">
    <property type="entry name" value="Ribbon-helix-helix"/>
    <property type="match status" value="1"/>
</dbReference>
<protein>
    <recommendedName>
        <fullName>Uncharacterized protein MJ1679</fullName>
    </recommendedName>
</protein>
<feature type="chain" id="PRO_0000107479" description="Uncharacterized protein MJ1679">
    <location>
        <begin position="1"/>
        <end position="97"/>
    </location>
</feature>
<accession>Q59073</accession>
<gene>
    <name type="ordered locus">MJ1679</name>
</gene>